<organism>
    <name type="scientific">Pseudoalteromonas translucida (strain TAC 125)</name>
    <dbReference type="NCBI Taxonomy" id="326442"/>
    <lineage>
        <taxon>Bacteria</taxon>
        <taxon>Pseudomonadati</taxon>
        <taxon>Pseudomonadota</taxon>
        <taxon>Gammaproteobacteria</taxon>
        <taxon>Alteromonadales</taxon>
        <taxon>Pseudoalteromonadaceae</taxon>
        <taxon>Pseudoalteromonas</taxon>
    </lineage>
</organism>
<protein>
    <recommendedName>
        <fullName evidence="1">Na(+)-translocating NADH-quinone reductase subunit D</fullName>
        <shortName evidence="1">Na(+)-NQR subunit D</shortName>
        <shortName evidence="1">Na(+)-translocating NQR subunit D</shortName>
        <ecNumber evidence="1">7.2.1.1</ecNumber>
    </recommendedName>
    <alternativeName>
        <fullName evidence="1">NQR complex subunit D</fullName>
    </alternativeName>
    <alternativeName>
        <fullName evidence="1">NQR-1 subunit D</fullName>
    </alternativeName>
</protein>
<accession>Q3IHN8</accession>
<name>NQRD_PSET1</name>
<dbReference type="EC" id="7.2.1.1" evidence="1"/>
<dbReference type="EMBL" id="CR954246">
    <property type="protein sequence ID" value="CAI87294.1"/>
    <property type="molecule type" value="Genomic_DNA"/>
</dbReference>
<dbReference type="SMR" id="Q3IHN8"/>
<dbReference type="STRING" id="326442.PSHAa2238"/>
<dbReference type="KEGG" id="pha:PSHAa2238"/>
<dbReference type="eggNOG" id="COG1347">
    <property type="taxonomic scope" value="Bacteria"/>
</dbReference>
<dbReference type="HOGENOM" id="CLU_046659_1_1_6"/>
<dbReference type="BioCyc" id="PHAL326442:PSHA_RS11040-MONOMER"/>
<dbReference type="Proteomes" id="UP000006843">
    <property type="component" value="Chromosome I"/>
</dbReference>
<dbReference type="GO" id="GO:0005886">
    <property type="term" value="C:plasma membrane"/>
    <property type="evidence" value="ECO:0007669"/>
    <property type="project" value="UniProtKB-SubCell"/>
</dbReference>
<dbReference type="GO" id="GO:0016655">
    <property type="term" value="F:oxidoreductase activity, acting on NAD(P)H, quinone or similar compound as acceptor"/>
    <property type="evidence" value="ECO:0007669"/>
    <property type="project" value="UniProtKB-UniRule"/>
</dbReference>
<dbReference type="GO" id="GO:0006814">
    <property type="term" value="P:sodium ion transport"/>
    <property type="evidence" value="ECO:0007669"/>
    <property type="project" value="UniProtKB-UniRule"/>
</dbReference>
<dbReference type="HAMAP" id="MF_00428">
    <property type="entry name" value="NqrD"/>
    <property type="match status" value="1"/>
</dbReference>
<dbReference type="InterPro" id="IPR011292">
    <property type="entry name" value="NqrD"/>
</dbReference>
<dbReference type="InterPro" id="IPR003667">
    <property type="entry name" value="NqrDE/RnfAE"/>
</dbReference>
<dbReference type="NCBIfam" id="TIGR01939">
    <property type="entry name" value="nqrD"/>
    <property type="match status" value="1"/>
</dbReference>
<dbReference type="NCBIfam" id="NF006777">
    <property type="entry name" value="PRK09292.1"/>
    <property type="match status" value="1"/>
</dbReference>
<dbReference type="NCBIfam" id="NF009070">
    <property type="entry name" value="PRK12405.1"/>
    <property type="match status" value="1"/>
</dbReference>
<dbReference type="PANTHER" id="PTHR30586">
    <property type="entry name" value="ELECTRON TRANSPORT COMPLEX PROTEIN RNFE"/>
    <property type="match status" value="1"/>
</dbReference>
<dbReference type="PANTHER" id="PTHR30586:SF1">
    <property type="entry name" value="NA(+)-TRANSLOCATING NADH-QUINONE REDUCTASE SUBUNIT D"/>
    <property type="match status" value="1"/>
</dbReference>
<dbReference type="Pfam" id="PF02508">
    <property type="entry name" value="Rnf-Nqr"/>
    <property type="match status" value="1"/>
</dbReference>
<dbReference type="PIRSF" id="PIRSF006102">
    <property type="entry name" value="NQR_DE"/>
    <property type="match status" value="1"/>
</dbReference>
<proteinExistence type="inferred from homology"/>
<keyword id="KW-0997">Cell inner membrane</keyword>
<keyword id="KW-1003">Cell membrane</keyword>
<keyword id="KW-0406">Ion transport</keyword>
<keyword id="KW-0472">Membrane</keyword>
<keyword id="KW-0520">NAD</keyword>
<keyword id="KW-1185">Reference proteome</keyword>
<keyword id="KW-0915">Sodium</keyword>
<keyword id="KW-0739">Sodium transport</keyword>
<keyword id="KW-1278">Translocase</keyword>
<keyword id="KW-0812">Transmembrane</keyword>
<keyword id="KW-1133">Transmembrane helix</keyword>
<keyword id="KW-0813">Transport</keyword>
<keyword id="KW-0830">Ubiquinone</keyword>
<feature type="chain" id="PRO_1000060162" description="Na(+)-translocating NADH-quinone reductase subunit D">
    <location>
        <begin position="1"/>
        <end position="210"/>
    </location>
</feature>
<feature type="transmembrane region" description="Helical" evidence="1">
    <location>
        <begin position="9"/>
        <end position="29"/>
    </location>
</feature>
<feature type="transmembrane region" description="Helical" evidence="1">
    <location>
        <begin position="42"/>
        <end position="62"/>
    </location>
</feature>
<feature type="transmembrane region" description="Helical" evidence="1">
    <location>
        <begin position="72"/>
        <end position="92"/>
    </location>
</feature>
<feature type="transmembrane region" description="Helical" evidence="1">
    <location>
        <begin position="96"/>
        <end position="116"/>
    </location>
</feature>
<feature type="transmembrane region" description="Helical" evidence="1">
    <location>
        <begin position="131"/>
        <end position="151"/>
    </location>
</feature>
<feature type="transmembrane region" description="Helical" evidence="1">
    <location>
        <begin position="178"/>
        <end position="198"/>
    </location>
</feature>
<sequence length="210" mass="22624">MADTKEMKAVLFGPVLANNPIALQVLGICSALAVTSSLKNALIMSIALTLVTAFSSFFISTIRNQIPSSVRIIVQMTIIASLVIVVDQVLQAFSYATAKELSVFIGLIITNCIVMGRAEAYAMKSPPLMSFLDGIGNGLGYSVVLLTVGFIRELFGKGSLFGVDIIPLVQNGGWYQPMGLLILPPSAFFIIGLFIWVLRTYKKDQVEAKA</sequence>
<evidence type="ECO:0000255" key="1">
    <source>
        <dbReference type="HAMAP-Rule" id="MF_00428"/>
    </source>
</evidence>
<reference key="1">
    <citation type="journal article" date="2005" name="Genome Res.">
        <title>Coping with cold: the genome of the versatile marine Antarctica bacterium Pseudoalteromonas haloplanktis TAC125.</title>
        <authorList>
            <person name="Medigue C."/>
            <person name="Krin E."/>
            <person name="Pascal G."/>
            <person name="Barbe V."/>
            <person name="Bernsel A."/>
            <person name="Bertin P.N."/>
            <person name="Cheung F."/>
            <person name="Cruveiller S."/>
            <person name="D'Amico S."/>
            <person name="Duilio A."/>
            <person name="Fang G."/>
            <person name="Feller G."/>
            <person name="Ho C."/>
            <person name="Mangenot S."/>
            <person name="Marino G."/>
            <person name="Nilsson J."/>
            <person name="Parrilli E."/>
            <person name="Rocha E.P.C."/>
            <person name="Rouy Z."/>
            <person name="Sekowska A."/>
            <person name="Tutino M.L."/>
            <person name="Vallenet D."/>
            <person name="von Heijne G."/>
            <person name="Danchin A."/>
        </authorList>
    </citation>
    <scope>NUCLEOTIDE SEQUENCE [LARGE SCALE GENOMIC DNA]</scope>
    <source>
        <strain>TAC 125</strain>
    </source>
</reference>
<comment type="function">
    <text evidence="1">NQR complex catalyzes the reduction of ubiquinone-1 to ubiquinol by two successive reactions, coupled with the transport of Na(+) ions from the cytoplasm to the periplasm. NqrA to NqrE are probably involved in the second step, the conversion of ubisemiquinone to ubiquinol.</text>
</comment>
<comment type="catalytic activity">
    <reaction evidence="1">
        <text>a ubiquinone + n Na(+)(in) + NADH + H(+) = a ubiquinol + n Na(+)(out) + NAD(+)</text>
        <dbReference type="Rhea" id="RHEA:47748"/>
        <dbReference type="Rhea" id="RHEA-COMP:9565"/>
        <dbReference type="Rhea" id="RHEA-COMP:9566"/>
        <dbReference type="ChEBI" id="CHEBI:15378"/>
        <dbReference type="ChEBI" id="CHEBI:16389"/>
        <dbReference type="ChEBI" id="CHEBI:17976"/>
        <dbReference type="ChEBI" id="CHEBI:29101"/>
        <dbReference type="ChEBI" id="CHEBI:57540"/>
        <dbReference type="ChEBI" id="CHEBI:57945"/>
        <dbReference type="EC" id="7.2.1.1"/>
    </reaction>
</comment>
<comment type="subunit">
    <text evidence="1">Composed of six subunits; NqrA, NqrB, NqrC, NqrD, NqrE and NqrF.</text>
</comment>
<comment type="subcellular location">
    <subcellularLocation>
        <location evidence="1">Cell inner membrane</location>
        <topology evidence="1">Multi-pass membrane protein</topology>
    </subcellularLocation>
</comment>
<comment type="similarity">
    <text evidence="1">Belongs to the NqrDE/RnfAE family.</text>
</comment>
<gene>
    <name evidence="1" type="primary">nqrD</name>
    <name type="ordered locus">PSHAa2238</name>
</gene>